<name>ALF_PSEAE</name>
<reference key="1">
    <citation type="journal article" date="2000" name="Nature">
        <title>Complete genome sequence of Pseudomonas aeruginosa PAO1, an opportunistic pathogen.</title>
        <authorList>
            <person name="Stover C.K."/>
            <person name="Pham X.-Q.T."/>
            <person name="Erwin A.L."/>
            <person name="Mizoguchi S.D."/>
            <person name="Warrener P."/>
            <person name="Hickey M.J."/>
            <person name="Brinkman F.S.L."/>
            <person name="Hufnagle W.O."/>
            <person name="Kowalik D.J."/>
            <person name="Lagrou M."/>
            <person name="Garber R.L."/>
            <person name="Goltry L."/>
            <person name="Tolentino E."/>
            <person name="Westbrock-Wadman S."/>
            <person name="Yuan Y."/>
            <person name="Brody L.L."/>
            <person name="Coulter S.N."/>
            <person name="Folger K.R."/>
            <person name="Kas A."/>
            <person name="Larbig K."/>
            <person name="Lim R.M."/>
            <person name="Smith K.A."/>
            <person name="Spencer D.H."/>
            <person name="Wong G.K.-S."/>
            <person name="Wu Z."/>
            <person name="Paulsen I.T."/>
            <person name="Reizer J."/>
            <person name="Saier M.H. Jr."/>
            <person name="Hancock R.E.W."/>
            <person name="Lory S."/>
            <person name="Olson M.V."/>
        </authorList>
    </citation>
    <scope>NUCLEOTIDE SEQUENCE [LARGE SCALE GENOMIC DNA]</scope>
    <source>
        <strain>ATCC 15692 / DSM 22644 / CIP 104116 / JCM 14847 / LMG 12228 / 1C / PRS 101 / PAO1</strain>
    </source>
</reference>
<protein>
    <recommendedName>
        <fullName>Fructose-bisphosphate aldolase</fullName>
        <shortName>FBP aldolase</shortName>
        <shortName>FBPA</shortName>
        <ecNumber>4.1.2.13</ecNumber>
    </recommendedName>
    <alternativeName>
        <fullName>Fructose-1,6-bisphosphate aldolase</fullName>
    </alternativeName>
</protein>
<proteinExistence type="inferred from homology"/>
<feature type="chain" id="PRO_0000178725" description="Fructose-bisphosphate aldolase">
    <location>
        <begin position="1"/>
        <end position="354"/>
    </location>
</feature>
<feature type="active site" description="Proton donor" evidence="1">
    <location>
        <position position="83"/>
    </location>
</feature>
<feature type="binding site" evidence="1">
    <location>
        <position position="50"/>
    </location>
    <ligand>
        <name>D-glyceraldehyde 3-phosphate</name>
        <dbReference type="ChEBI" id="CHEBI:59776"/>
    </ligand>
</feature>
<feature type="binding site" evidence="1">
    <location>
        <position position="84"/>
    </location>
    <ligand>
        <name>Zn(2+)</name>
        <dbReference type="ChEBI" id="CHEBI:29105"/>
        <label>1</label>
        <note>catalytic</note>
    </ligand>
</feature>
<feature type="binding site" evidence="1">
    <location>
        <position position="105"/>
    </location>
    <ligand>
        <name>Zn(2+)</name>
        <dbReference type="ChEBI" id="CHEBI:29105"/>
        <label>2</label>
    </ligand>
</feature>
<feature type="binding site" evidence="1">
    <location>
        <position position="142"/>
    </location>
    <ligand>
        <name>Zn(2+)</name>
        <dbReference type="ChEBI" id="CHEBI:29105"/>
        <label>2</label>
    </ligand>
</feature>
<feature type="binding site" evidence="1">
    <location>
        <position position="198"/>
    </location>
    <ligand>
        <name>Zn(2+)</name>
        <dbReference type="ChEBI" id="CHEBI:29105"/>
        <label>1</label>
        <note>catalytic</note>
    </ligand>
</feature>
<feature type="binding site" evidence="1">
    <location>
        <position position="199"/>
    </location>
    <ligand>
        <name>dihydroxyacetone phosphate</name>
        <dbReference type="ChEBI" id="CHEBI:57642"/>
    </ligand>
</feature>
<feature type="binding site" evidence="1">
    <location>
        <position position="232"/>
    </location>
    <ligand>
        <name>Zn(2+)</name>
        <dbReference type="ChEBI" id="CHEBI:29105"/>
        <label>1</label>
        <note>catalytic</note>
    </ligand>
</feature>
<feature type="binding site" evidence="1">
    <location>
        <begin position="233"/>
        <end position="235"/>
    </location>
    <ligand>
        <name>dihydroxyacetone phosphate</name>
        <dbReference type="ChEBI" id="CHEBI:57642"/>
    </ligand>
</feature>
<feature type="binding site" evidence="1">
    <location>
        <begin position="275"/>
        <end position="278"/>
    </location>
    <ligand>
        <name>dihydroxyacetone phosphate</name>
        <dbReference type="ChEBI" id="CHEBI:57642"/>
    </ligand>
</feature>
<organism>
    <name type="scientific">Pseudomonas aeruginosa (strain ATCC 15692 / DSM 22644 / CIP 104116 / JCM 14847 / LMG 12228 / 1C / PRS 101 / PAO1)</name>
    <dbReference type="NCBI Taxonomy" id="208964"/>
    <lineage>
        <taxon>Bacteria</taxon>
        <taxon>Pseudomonadati</taxon>
        <taxon>Pseudomonadota</taxon>
        <taxon>Gammaproteobacteria</taxon>
        <taxon>Pseudomonadales</taxon>
        <taxon>Pseudomonadaceae</taxon>
        <taxon>Pseudomonas</taxon>
    </lineage>
</organism>
<sequence>MALISMRQMLDHAAEFGYGVPAFNVNNLEQMRAIMEAADKTDSPVIVQASAGARKYAGAPFLRHLILAAIEEFPHIPVVMHQDHGTSPDVCQRSIQLGFSSVMMDGSLREDGKTPADYDYNVRVTQQTVAFAHACGVSVEGELGCLGSLETGMAGEEDGVGAEGVLDHSQLLTDPEEAADFVKKTKVDALAIAIGTSHGAYKFTKPPTGDTLSIQRIKEIHARIPDTHLVMHGSSSVPQDWLAIINEYGGEIKETYGVPVEEIVEGIKYGVRKVNIDTDLRLASTGAIRRFLAQNPSEFDPRKYFSKTVEAMRDICIARYEAFGTAGNASKIKPISLEGMFQRYARGELDPKVN</sequence>
<evidence type="ECO:0000250" key="1"/>
<evidence type="ECO:0000305" key="2"/>
<comment type="function">
    <text evidence="1">Catalyzes the aldol condensation of dihydroxyacetone phosphate (DHAP or glycerone-phosphate) with glyceraldehyde 3-phosphate (G3P) to form fructose 1,6-bisphosphate (FBP) in gluconeogenesis and the reverse reaction in glycolysis.</text>
</comment>
<comment type="catalytic activity">
    <reaction>
        <text>beta-D-fructose 1,6-bisphosphate = D-glyceraldehyde 3-phosphate + dihydroxyacetone phosphate</text>
        <dbReference type="Rhea" id="RHEA:14729"/>
        <dbReference type="ChEBI" id="CHEBI:32966"/>
        <dbReference type="ChEBI" id="CHEBI:57642"/>
        <dbReference type="ChEBI" id="CHEBI:59776"/>
        <dbReference type="EC" id="4.1.2.13"/>
    </reaction>
</comment>
<comment type="cofactor">
    <cofactor evidence="1">
        <name>Zn(2+)</name>
        <dbReference type="ChEBI" id="CHEBI:29105"/>
    </cofactor>
    <text evidence="1">Binds 2 Zn(2+) ions per subunit. One is catalytic and the other provides a structural contribution.</text>
</comment>
<comment type="pathway">
    <text>Carbohydrate degradation; glycolysis; D-glyceraldehyde 3-phosphate and glycerone phosphate from D-glucose: step 4/4.</text>
</comment>
<comment type="similarity">
    <text evidence="2">Belongs to the class II fructose-bisphosphate aldolase family.</text>
</comment>
<dbReference type="EC" id="4.1.2.13"/>
<dbReference type="EMBL" id="AE004091">
    <property type="protein sequence ID" value="AAG03944.1"/>
    <property type="molecule type" value="Genomic_DNA"/>
</dbReference>
<dbReference type="PIR" id="C83575">
    <property type="entry name" value="C83575"/>
</dbReference>
<dbReference type="RefSeq" id="NP_249246.1">
    <property type="nucleotide sequence ID" value="NC_002516.2"/>
</dbReference>
<dbReference type="RefSeq" id="WP_003084964.1">
    <property type="nucleotide sequence ID" value="NZ_QZGE01000010.1"/>
</dbReference>
<dbReference type="SMR" id="Q9I5Y1"/>
<dbReference type="FunCoup" id="Q9I5Y1">
    <property type="interactions" value="514"/>
</dbReference>
<dbReference type="STRING" id="208964.PA0555"/>
<dbReference type="PaxDb" id="208964-PA0555"/>
<dbReference type="GeneID" id="880792"/>
<dbReference type="KEGG" id="pae:PA0555"/>
<dbReference type="PATRIC" id="fig|208964.12.peg.587"/>
<dbReference type="PseudoCAP" id="PA0555"/>
<dbReference type="HOGENOM" id="CLU_040088_0_0_6"/>
<dbReference type="InParanoid" id="Q9I5Y1"/>
<dbReference type="OrthoDB" id="9803995at2"/>
<dbReference type="PhylomeDB" id="Q9I5Y1"/>
<dbReference type="BioCyc" id="PAER208964:G1FZ6-561-MONOMER"/>
<dbReference type="UniPathway" id="UPA00109">
    <property type="reaction ID" value="UER00183"/>
</dbReference>
<dbReference type="Proteomes" id="UP000002438">
    <property type="component" value="Chromosome"/>
</dbReference>
<dbReference type="GO" id="GO:0004332">
    <property type="term" value="F:fructose-bisphosphate aldolase activity"/>
    <property type="evidence" value="ECO:0007669"/>
    <property type="project" value="UniProtKB-EC"/>
</dbReference>
<dbReference type="GO" id="GO:0008270">
    <property type="term" value="F:zinc ion binding"/>
    <property type="evidence" value="ECO:0007669"/>
    <property type="project" value="InterPro"/>
</dbReference>
<dbReference type="GO" id="GO:0006096">
    <property type="term" value="P:glycolytic process"/>
    <property type="evidence" value="ECO:0007669"/>
    <property type="project" value="UniProtKB-UniPathway"/>
</dbReference>
<dbReference type="CDD" id="cd00947">
    <property type="entry name" value="TBP_aldolase_IIB"/>
    <property type="match status" value="1"/>
</dbReference>
<dbReference type="FunFam" id="3.20.20.70:FF:000111">
    <property type="entry name" value="Fructose-1,6-bisphosphate aldolase"/>
    <property type="match status" value="1"/>
</dbReference>
<dbReference type="Gene3D" id="3.20.20.70">
    <property type="entry name" value="Aldolase class I"/>
    <property type="match status" value="1"/>
</dbReference>
<dbReference type="InterPro" id="IPR013785">
    <property type="entry name" value="Aldolase_TIM"/>
</dbReference>
<dbReference type="InterPro" id="IPR050246">
    <property type="entry name" value="Class_II_FBP_aldolase"/>
</dbReference>
<dbReference type="InterPro" id="IPR000771">
    <property type="entry name" value="FBA_II"/>
</dbReference>
<dbReference type="InterPro" id="IPR006412">
    <property type="entry name" value="Fruct_bisP_Calv"/>
</dbReference>
<dbReference type="NCBIfam" id="TIGR00167">
    <property type="entry name" value="cbbA"/>
    <property type="match status" value="1"/>
</dbReference>
<dbReference type="NCBIfam" id="TIGR01521">
    <property type="entry name" value="FruBisAldo_II_B"/>
    <property type="match status" value="1"/>
</dbReference>
<dbReference type="PANTHER" id="PTHR30304">
    <property type="entry name" value="D-TAGATOSE-1,6-BISPHOSPHATE ALDOLASE"/>
    <property type="match status" value="1"/>
</dbReference>
<dbReference type="PANTHER" id="PTHR30304:SF0">
    <property type="entry name" value="D-TAGATOSE-1,6-BISPHOSPHATE ALDOLASE SUBUNIT GATY-RELATED"/>
    <property type="match status" value="1"/>
</dbReference>
<dbReference type="Pfam" id="PF01116">
    <property type="entry name" value="F_bP_aldolase"/>
    <property type="match status" value="1"/>
</dbReference>
<dbReference type="PIRSF" id="PIRSF001359">
    <property type="entry name" value="F_bP_aldolase_II"/>
    <property type="match status" value="1"/>
</dbReference>
<dbReference type="SUPFAM" id="SSF51569">
    <property type="entry name" value="Aldolase"/>
    <property type="match status" value="1"/>
</dbReference>
<dbReference type="PROSITE" id="PS00602">
    <property type="entry name" value="ALDOLASE_CLASS_II_1"/>
    <property type="match status" value="1"/>
</dbReference>
<dbReference type="PROSITE" id="PS00806">
    <property type="entry name" value="ALDOLASE_CLASS_II_2"/>
    <property type="match status" value="1"/>
</dbReference>
<accession>Q9I5Y1</accession>
<gene>
    <name type="primary">fba</name>
    <name type="synonym">fda</name>
    <name type="ordered locus">PA0555</name>
</gene>
<keyword id="KW-0324">Glycolysis</keyword>
<keyword id="KW-0456">Lyase</keyword>
<keyword id="KW-0479">Metal-binding</keyword>
<keyword id="KW-1185">Reference proteome</keyword>
<keyword id="KW-0862">Zinc</keyword>